<proteinExistence type="inferred from homology"/>
<protein>
    <recommendedName>
        <fullName>Uncharacterized protein DR_0893</fullName>
    </recommendedName>
</protein>
<organism>
    <name type="scientific">Deinococcus radiodurans (strain ATCC 13939 / DSM 20539 / JCM 16871 / CCUG 27074 / LMG 4051 / NBRC 15346 / NCIMB 9279 / VKM B-1422 / R1)</name>
    <dbReference type="NCBI Taxonomy" id="243230"/>
    <lineage>
        <taxon>Bacteria</taxon>
        <taxon>Thermotogati</taxon>
        <taxon>Deinococcota</taxon>
        <taxon>Deinococci</taxon>
        <taxon>Deinococcales</taxon>
        <taxon>Deinococcaceae</taxon>
        <taxon>Deinococcus</taxon>
    </lineage>
</organism>
<evidence type="ECO:0000255" key="1"/>
<evidence type="ECO:0000305" key="2"/>
<gene>
    <name type="ordered locus">DR_0893</name>
</gene>
<reference key="1">
    <citation type="journal article" date="1999" name="Science">
        <title>Genome sequence of the radioresistant bacterium Deinococcus radiodurans R1.</title>
        <authorList>
            <person name="White O."/>
            <person name="Eisen J.A."/>
            <person name="Heidelberg J.F."/>
            <person name="Hickey E.K."/>
            <person name="Peterson J.D."/>
            <person name="Dodson R.J."/>
            <person name="Haft D.H."/>
            <person name="Gwinn M.L."/>
            <person name="Nelson W.C."/>
            <person name="Richardson D.L."/>
            <person name="Moffat K.S."/>
            <person name="Qin H."/>
            <person name="Jiang L."/>
            <person name="Pamphile W."/>
            <person name="Crosby M."/>
            <person name="Shen M."/>
            <person name="Vamathevan J.J."/>
            <person name="Lam P."/>
            <person name="McDonald L.A."/>
            <person name="Utterback T.R."/>
            <person name="Zalewski C."/>
            <person name="Makarova K.S."/>
            <person name="Aravind L."/>
            <person name="Daly M.J."/>
            <person name="Minton K.W."/>
            <person name="Fleischmann R.D."/>
            <person name="Ketchum K.A."/>
            <person name="Nelson K.E."/>
            <person name="Salzberg S.L."/>
            <person name="Smith H.O."/>
            <person name="Venter J.C."/>
            <person name="Fraser C.M."/>
        </authorList>
    </citation>
    <scope>NUCLEOTIDE SEQUENCE [LARGE SCALE GENOMIC DNA]</scope>
    <source>
        <strain>ATCC 13939 / DSM 20539 / JCM 16871 / CCUG 27074 / LMG 4051 / NBRC 15346 / NCIMB 9279 / VKM B-1422 / R1</strain>
    </source>
</reference>
<comment type="subcellular location">
    <subcellularLocation>
        <location evidence="2">Cell membrane</location>
        <topology evidence="2">Multi-pass membrane protein</topology>
    </subcellularLocation>
</comment>
<comment type="similarity">
    <text evidence="2">Belongs to the BI1 family.</text>
</comment>
<name>Y893_DEIRA</name>
<dbReference type="EMBL" id="AE000513">
    <property type="protein sequence ID" value="AAF10471.1"/>
    <property type="molecule type" value="Genomic_DNA"/>
</dbReference>
<dbReference type="PIR" id="A75462">
    <property type="entry name" value="A75462"/>
</dbReference>
<dbReference type="RefSeq" id="NP_294617.1">
    <property type="nucleotide sequence ID" value="NC_001263.1"/>
</dbReference>
<dbReference type="RefSeq" id="WP_010887538.1">
    <property type="nucleotide sequence ID" value="NC_001263.1"/>
</dbReference>
<dbReference type="SMR" id="Q9RVX8"/>
<dbReference type="FunCoup" id="Q9RVX8">
    <property type="interactions" value="255"/>
</dbReference>
<dbReference type="STRING" id="243230.DR_0893"/>
<dbReference type="PaxDb" id="243230-DR_0893"/>
<dbReference type="EnsemblBacteria" id="AAF10471">
    <property type="protein sequence ID" value="AAF10471"/>
    <property type="gene ID" value="DR_0893"/>
</dbReference>
<dbReference type="GeneID" id="69517138"/>
<dbReference type="KEGG" id="dra:DR_0893"/>
<dbReference type="PATRIC" id="fig|243230.17.peg.1079"/>
<dbReference type="eggNOG" id="COG0670">
    <property type="taxonomic scope" value="Bacteria"/>
</dbReference>
<dbReference type="HOGENOM" id="CLU_058671_1_1_0"/>
<dbReference type="InParanoid" id="Q9RVX8"/>
<dbReference type="OrthoDB" id="9793828at2"/>
<dbReference type="Proteomes" id="UP000002524">
    <property type="component" value="Chromosome 1"/>
</dbReference>
<dbReference type="GO" id="GO:0005886">
    <property type="term" value="C:plasma membrane"/>
    <property type="evidence" value="ECO:0000318"/>
    <property type="project" value="GO_Central"/>
</dbReference>
<dbReference type="GO" id="GO:0005262">
    <property type="term" value="F:calcium channel activity"/>
    <property type="evidence" value="ECO:0000318"/>
    <property type="project" value="GO_Central"/>
</dbReference>
<dbReference type="GO" id="GO:0030162">
    <property type="term" value="P:regulation of proteolysis"/>
    <property type="evidence" value="ECO:0000318"/>
    <property type="project" value="GO_Central"/>
</dbReference>
<dbReference type="CDD" id="cd10432">
    <property type="entry name" value="BI-1-like_bacterial"/>
    <property type="match status" value="1"/>
</dbReference>
<dbReference type="InterPro" id="IPR006214">
    <property type="entry name" value="Bax_inhibitor_1-related"/>
</dbReference>
<dbReference type="PANTHER" id="PTHR23291">
    <property type="entry name" value="BAX INHIBITOR-RELATED"/>
    <property type="match status" value="1"/>
</dbReference>
<dbReference type="PANTHER" id="PTHR23291:SF50">
    <property type="entry name" value="PROTEIN LIFEGUARD 4"/>
    <property type="match status" value="1"/>
</dbReference>
<dbReference type="Pfam" id="PF01027">
    <property type="entry name" value="Bax1-I"/>
    <property type="match status" value="1"/>
</dbReference>
<accession>Q9RVX8</accession>
<sequence length="231" mass="24447">MVKSMQQIAMTQQKTLDQVRTFMARTYSWMAAGLALTAGVAYLTAQNEGLAMQVASLRLPLMLAQLALVFVLSMFAQRLSAAVAGALFVGYAALTGLTFSALLFAYSPAAVITAFAVSAGTFGLMSVAGFVIKKDLSAMGRFFLFAVLGLVVAMLVNLFVGSSALSLGISMIGVFLFAGLTAYDTQMLRNLALSGISGEQAERASINGALALYLDFINIFLFLLNIGNSRD</sequence>
<keyword id="KW-1003">Cell membrane</keyword>
<keyword id="KW-0472">Membrane</keyword>
<keyword id="KW-1185">Reference proteome</keyword>
<keyword id="KW-0812">Transmembrane</keyword>
<keyword id="KW-1133">Transmembrane helix</keyword>
<feature type="chain" id="PRO_0000179099" description="Uncharacterized protein DR_0893">
    <location>
        <begin position="1"/>
        <end position="231"/>
    </location>
</feature>
<feature type="transmembrane region" description="Helical" evidence="1">
    <location>
        <begin position="26"/>
        <end position="46"/>
    </location>
</feature>
<feature type="transmembrane region" description="Helical" evidence="1">
    <location>
        <begin position="56"/>
        <end position="76"/>
    </location>
</feature>
<feature type="transmembrane region" description="Helical" evidence="1">
    <location>
        <begin position="84"/>
        <end position="104"/>
    </location>
</feature>
<feature type="transmembrane region" description="Helical" evidence="1">
    <location>
        <begin position="112"/>
        <end position="132"/>
    </location>
</feature>
<feature type="transmembrane region" description="Helical" evidence="1">
    <location>
        <begin position="142"/>
        <end position="162"/>
    </location>
</feature>
<feature type="transmembrane region" description="Helical" evidence="1">
    <location>
        <begin position="163"/>
        <end position="183"/>
    </location>
</feature>
<feature type="transmembrane region" description="Helical" evidence="1">
    <location>
        <begin position="206"/>
        <end position="226"/>
    </location>
</feature>